<gene>
    <name evidence="1" type="primary">glyQ</name>
    <name type="ordered locus">Smal_3983</name>
</gene>
<name>SYGA_STRM5</name>
<keyword id="KW-0030">Aminoacyl-tRNA synthetase</keyword>
<keyword id="KW-0067">ATP-binding</keyword>
<keyword id="KW-0963">Cytoplasm</keyword>
<keyword id="KW-0436">Ligase</keyword>
<keyword id="KW-0547">Nucleotide-binding</keyword>
<keyword id="KW-0648">Protein biosynthesis</keyword>
<proteinExistence type="inferred from homology"/>
<accession>B4SNR2</accession>
<dbReference type="EC" id="6.1.1.14" evidence="1"/>
<dbReference type="EMBL" id="CP001111">
    <property type="protein sequence ID" value="ACF53682.1"/>
    <property type="molecule type" value="Genomic_DNA"/>
</dbReference>
<dbReference type="RefSeq" id="WP_006403404.1">
    <property type="nucleotide sequence ID" value="NC_011071.1"/>
</dbReference>
<dbReference type="SMR" id="B4SNR2"/>
<dbReference type="STRING" id="391008.Smal_3983"/>
<dbReference type="KEGG" id="smt:Smal_3983"/>
<dbReference type="eggNOG" id="COG0752">
    <property type="taxonomic scope" value="Bacteria"/>
</dbReference>
<dbReference type="HOGENOM" id="CLU_057066_1_0_6"/>
<dbReference type="OrthoDB" id="9802183at2"/>
<dbReference type="Proteomes" id="UP000001867">
    <property type="component" value="Chromosome"/>
</dbReference>
<dbReference type="GO" id="GO:0005829">
    <property type="term" value="C:cytosol"/>
    <property type="evidence" value="ECO:0007669"/>
    <property type="project" value="TreeGrafter"/>
</dbReference>
<dbReference type="GO" id="GO:0005524">
    <property type="term" value="F:ATP binding"/>
    <property type="evidence" value="ECO:0007669"/>
    <property type="project" value="UniProtKB-UniRule"/>
</dbReference>
<dbReference type="GO" id="GO:0004820">
    <property type="term" value="F:glycine-tRNA ligase activity"/>
    <property type="evidence" value="ECO:0007669"/>
    <property type="project" value="UniProtKB-UniRule"/>
</dbReference>
<dbReference type="GO" id="GO:0006426">
    <property type="term" value="P:glycyl-tRNA aminoacylation"/>
    <property type="evidence" value="ECO:0007669"/>
    <property type="project" value="UniProtKB-UniRule"/>
</dbReference>
<dbReference type="CDD" id="cd00733">
    <property type="entry name" value="GlyRS_alpha_core"/>
    <property type="match status" value="1"/>
</dbReference>
<dbReference type="FunFam" id="3.30.930.10:FF:000006">
    <property type="entry name" value="Glycine--tRNA ligase alpha subunit"/>
    <property type="match status" value="1"/>
</dbReference>
<dbReference type="Gene3D" id="3.30.930.10">
    <property type="entry name" value="Bira Bifunctional Protein, Domain 2"/>
    <property type="match status" value="1"/>
</dbReference>
<dbReference type="Gene3D" id="1.20.58.180">
    <property type="entry name" value="Class II aaRS and biotin synthetases, domain 2"/>
    <property type="match status" value="1"/>
</dbReference>
<dbReference type="HAMAP" id="MF_00254">
    <property type="entry name" value="Gly_tRNA_synth_alpha"/>
    <property type="match status" value="1"/>
</dbReference>
<dbReference type="InterPro" id="IPR045864">
    <property type="entry name" value="aa-tRNA-synth_II/BPL/LPL"/>
</dbReference>
<dbReference type="InterPro" id="IPR006194">
    <property type="entry name" value="Gly-tRNA-synth_heterodimer"/>
</dbReference>
<dbReference type="InterPro" id="IPR002310">
    <property type="entry name" value="Gly-tRNA_ligase_asu"/>
</dbReference>
<dbReference type="NCBIfam" id="TIGR00388">
    <property type="entry name" value="glyQ"/>
    <property type="match status" value="1"/>
</dbReference>
<dbReference type="NCBIfam" id="NF006827">
    <property type="entry name" value="PRK09348.1"/>
    <property type="match status" value="1"/>
</dbReference>
<dbReference type="PANTHER" id="PTHR30075:SF2">
    <property type="entry name" value="GLYCINE--TRNA LIGASE, CHLOROPLASTIC_MITOCHONDRIAL 2"/>
    <property type="match status" value="1"/>
</dbReference>
<dbReference type="PANTHER" id="PTHR30075">
    <property type="entry name" value="GLYCYL-TRNA SYNTHETASE"/>
    <property type="match status" value="1"/>
</dbReference>
<dbReference type="Pfam" id="PF02091">
    <property type="entry name" value="tRNA-synt_2e"/>
    <property type="match status" value="1"/>
</dbReference>
<dbReference type="PRINTS" id="PR01044">
    <property type="entry name" value="TRNASYNTHGA"/>
</dbReference>
<dbReference type="SUPFAM" id="SSF55681">
    <property type="entry name" value="Class II aaRS and biotin synthetases"/>
    <property type="match status" value="1"/>
</dbReference>
<dbReference type="PROSITE" id="PS50861">
    <property type="entry name" value="AA_TRNA_LIGASE_II_GLYAB"/>
    <property type="match status" value="1"/>
</dbReference>
<reference key="1">
    <citation type="submission" date="2008-06" db="EMBL/GenBank/DDBJ databases">
        <title>Complete sequence of Stenotrophomonas maltophilia R551-3.</title>
        <authorList>
            <consortium name="US DOE Joint Genome Institute"/>
            <person name="Lucas S."/>
            <person name="Copeland A."/>
            <person name="Lapidus A."/>
            <person name="Glavina del Rio T."/>
            <person name="Dalin E."/>
            <person name="Tice H."/>
            <person name="Pitluck S."/>
            <person name="Chain P."/>
            <person name="Malfatti S."/>
            <person name="Shin M."/>
            <person name="Vergez L."/>
            <person name="Lang D."/>
            <person name="Schmutz J."/>
            <person name="Larimer F."/>
            <person name="Land M."/>
            <person name="Hauser L."/>
            <person name="Kyrpides N."/>
            <person name="Mikhailova N."/>
            <person name="Taghavi S."/>
            <person name="Monchy S."/>
            <person name="Newman L."/>
            <person name="Vangronsveld J."/>
            <person name="van der Lelie D."/>
            <person name="Richardson P."/>
        </authorList>
    </citation>
    <scope>NUCLEOTIDE SEQUENCE [LARGE SCALE GENOMIC DNA]</scope>
    <source>
        <strain>R551-3</strain>
    </source>
</reference>
<comment type="catalytic activity">
    <reaction evidence="1">
        <text>tRNA(Gly) + glycine + ATP = glycyl-tRNA(Gly) + AMP + diphosphate</text>
        <dbReference type="Rhea" id="RHEA:16013"/>
        <dbReference type="Rhea" id="RHEA-COMP:9664"/>
        <dbReference type="Rhea" id="RHEA-COMP:9683"/>
        <dbReference type="ChEBI" id="CHEBI:30616"/>
        <dbReference type="ChEBI" id="CHEBI:33019"/>
        <dbReference type="ChEBI" id="CHEBI:57305"/>
        <dbReference type="ChEBI" id="CHEBI:78442"/>
        <dbReference type="ChEBI" id="CHEBI:78522"/>
        <dbReference type="ChEBI" id="CHEBI:456215"/>
        <dbReference type="EC" id="6.1.1.14"/>
    </reaction>
</comment>
<comment type="subunit">
    <text evidence="1">Tetramer of two alpha and two beta subunits.</text>
</comment>
<comment type="subcellular location">
    <subcellularLocation>
        <location evidence="1">Cytoplasm</location>
    </subcellularLocation>
</comment>
<comment type="similarity">
    <text evidence="1">Belongs to the class-II aminoacyl-tRNA synthetase family.</text>
</comment>
<sequence length="303" mass="34726">MSATPTVPITFQGLIQTLNQFWAQQGCVLIQPLDLEVGAGTFHPATFLRAIGPESWNAAYVQPSRRPTDGRYGENPNRLQRYYQYQVAMKPAPDNIQQLYLDSLKALGIDPLVHDLRFVEDNWESPTLGAWGLGWEVWLNGMEVTQFTYFQQAGGLECRPVLGEITYGLERLCMYLQNCDNVYDLVWTYGPDGQPVTYGDVYHQNEVEQSTYNFEYADVEEMFHRFDACEREAQKLVEVNLPLPAYEQVMKASHTFNLLDARRAISVTERQRYILRVRALAQAVAKAYYEQREKLGFPGAKKA</sequence>
<evidence type="ECO:0000255" key="1">
    <source>
        <dbReference type="HAMAP-Rule" id="MF_00254"/>
    </source>
</evidence>
<organism>
    <name type="scientific">Stenotrophomonas maltophilia (strain R551-3)</name>
    <dbReference type="NCBI Taxonomy" id="391008"/>
    <lineage>
        <taxon>Bacteria</taxon>
        <taxon>Pseudomonadati</taxon>
        <taxon>Pseudomonadota</taxon>
        <taxon>Gammaproteobacteria</taxon>
        <taxon>Lysobacterales</taxon>
        <taxon>Lysobacteraceae</taxon>
        <taxon>Stenotrophomonas</taxon>
        <taxon>Stenotrophomonas maltophilia group</taxon>
    </lineage>
</organism>
<feature type="chain" id="PRO_1000101234" description="Glycine--tRNA ligase alpha subunit">
    <location>
        <begin position="1"/>
        <end position="303"/>
    </location>
</feature>
<protein>
    <recommendedName>
        <fullName evidence="1">Glycine--tRNA ligase alpha subunit</fullName>
        <ecNumber evidence="1">6.1.1.14</ecNumber>
    </recommendedName>
    <alternativeName>
        <fullName evidence="1">Glycyl-tRNA synthetase alpha subunit</fullName>
        <shortName evidence="1">GlyRS</shortName>
    </alternativeName>
</protein>